<feature type="chain" id="PRO_1000047413" description="Glycine--tRNA ligase alpha subunit">
    <location>
        <begin position="1"/>
        <end position="294"/>
    </location>
</feature>
<organism>
    <name type="scientific">Oleidesulfovibrio alaskensis (strain ATCC BAA-1058 / DSM 17464 / G20)</name>
    <name type="common">Desulfovibrio alaskensis</name>
    <dbReference type="NCBI Taxonomy" id="207559"/>
    <lineage>
        <taxon>Bacteria</taxon>
        <taxon>Pseudomonadati</taxon>
        <taxon>Thermodesulfobacteriota</taxon>
        <taxon>Desulfovibrionia</taxon>
        <taxon>Desulfovibrionales</taxon>
        <taxon>Desulfovibrionaceae</taxon>
        <taxon>Oleidesulfovibrio</taxon>
    </lineage>
</organism>
<accession>Q30ZR5</accession>
<sequence length="294" mass="34015">MNFQDVILTLQNFWARRGCAIQQPFDSECGAGTFNPATFLRVIGPEPWNVAYVEPSRRPTDGRYGENPNRLQHYFQFQVILKPSPDNVQEIYIDSLRALGINPAEHDIRFVEDDWESPTLGAWGLGWEVWLNGMEVTQFTYFQQVGGIDLSPTSVEITYGLERLCMYLQEKESVYDLMWNDTVTYGHIYHRNEVEMSRYNFEESDAGMLLELFNAYERECTRLCEKQLLWPAYDYCLKCSHTFNLLDARGAISITERTGYIGRVRVLASSVARLYAAQREEMGYPMLNTGIRKG</sequence>
<reference key="1">
    <citation type="journal article" date="2011" name="J. Bacteriol.">
        <title>Complete genome sequence and updated annotation of Desulfovibrio alaskensis G20.</title>
        <authorList>
            <person name="Hauser L.J."/>
            <person name="Land M.L."/>
            <person name="Brown S.D."/>
            <person name="Larimer F."/>
            <person name="Keller K.L."/>
            <person name="Rapp-Giles B.J."/>
            <person name="Price M.N."/>
            <person name="Lin M."/>
            <person name="Bruce D.C."/>
            <person name="Detter J.C."/>
            <person name="Tapia R."/>
            <person name="Han C.S."/>
            <person name="Goodwin L.A."/>
            <person name="Cheng J.F."/>
            <person name="Pitluck S."/>
            <person name="Copeland A."/>
            <person name="Lucas S."/>
            <person name="Nolan M."/>
            <person name="Lapidus A.L."/>
            <person name="Palumbo A.V."/>
            <person name="Wall J.D."/>
        </authorList>
    </citation>
    <scope>NUCLEOTIDE SEQUENCE [LARGE SCALE GENOMIC DNA]</scope>
    <source>
        <strain>ATCC BAA-1058 / DSM 17464 / G20</strain>
    </source>
</reference>
<evidence type="ECO:0000255" key="1">
    <source>
        <dbReference type="HAMAP-Rule" id="MF_00254"/>
    </source>
</evidence>
<gene>
    <name evidence="1" type="primary">glyQ</name>
    <name type="ordered locus">Dde_2034</name>
</gene>
<comment type="catalytic activity">
    <reaction evidence="1">
        <text>tRNA(Gly) + glycine + ATP = glycyl-tRNA(Gly) + AMP + diphosphate</text>
        <dbReference type="Rhea" id="RHEA:16013"/>
        <dbReference type="Rhea" id="RHEA-COMP:9664"/>
        <dbReference type="Rhea" id="RHEA-COMP:9683"/>
        <dbReference type="ChEBI" id="CHEBI:30616"/>
        <dbReference type="ChEBI" id="CHEBI:33019"/>
        <dbReference type="ChEBI" id="CHEBI:57305"/>
        <dbReference type="ChEBI" id="CHEBI:78442"/>
        <dbReference type="ChEBI" id="CHEBI:78522"/>
        <dbReference type="ChEBI" id="CHEBI:456215"/>
        <dbReference type="EC" id="6.1.1.14"/>
    </reaction>
</comment>
<comment type="subunit">
    <text evidence="1">Tetramer of two alpha and two beta subunits.</text>
</comment>
<comment type="subcellular location">
    <subcellularLocation>
        <location evidence="1">Cytoplasm</location>
    </subcellularLocation>
</comment>
<comment type="similarity">
    <text evidence="1">Belongs to the class-II aminoacyl-tRNA synthetase family.</text>
</comment>
<protein>
    <recommendedName>
        <fullName evidence="1">Glycine--tRNA ligase alpha subunit</fullName>
        <ecNumber evidence="1">6.1.1.14</ecNumber>
    </recommendedName>
    <alternativeName>
        <fullName evidence="1">Glycyl-tRNA synthetase alpha subunit</fullName>
        <shortName evidence="1">GlyRS</shortName>
    </alternativeName>
</protein>
<proteinExistence type="inferred from homology"/>
<keyword id="KW-0030">Aminoacyl-tRNA synthetase</keyword>
<keyword id="KW-0067">ATP-binding</keyword>
<keyword id="KW-0963">Cytoplasm</keyword>
<keyword id="KW-0436">Ligase</keyword>
<keyword id="KW-0547">Nucleotide-binding</keyword>
<keyword id="KW-0648">Protein biosynthesis</keyword>
<keyword id="KW-1185">Reference proteome</keyword>
<name>SYGA_OLEA2</name>
<dbReference type="EC" id="6.1.1.14" evidence="1"/>
<dbReference type="EMBL" id="CP000112">
    <property type="protein sequence ID" value="ABB38831.1"/>
    <property type="molecule type" value="Genomic_DNA"/>
</dbReference>
<dbReference type="RefSeq" id="WP_011367936.1">
    <property type="nucleotide sequence ID" value="NC_007519.1"/>
</dbReference>
<dbReference type="SMR" id="Q30ZR5"/>
<dbReference type="STRING" id="207559.Dde_2034"/>
<dbReference type="KEGG" id="dde:Dde_2034"/>
<dbReference type="eggNOG" id="COG0752">
    <property type="taxonomic scope" value="Bacteria"/>
</dbReference>
<dbReference type="HOGENOM" id="CLU_057066_1_0_7"/>
<dbReference type="Proteomes" id="UP000002710">
    <property type="component" value="Chromosome"/>
</dbReference>
<dbReference type="GO" id="GO:0005829">
    <property type="term" value="C:cytosol"/>
    <property type="evidence" value="ECO:0007669"/>
    <property type="project" value="TreeGrafter"/>
</dbReference>
<dbReference type="GO" id="GO:0005524">
    <property type="term" value="F:ATP binding"/>
    <property type="evidence" value="ECO:0007669"/>
    <property type="project" value="UniProtKB-UniRule"/>
</dbReference>
<dbReference type="GO" id="GO:0004820">
    <property type="term" value="F:glycine-tRNA ligase activity"/>
    <property type="evidence" value="ECO:0007669"/>
    <property type="project" value="UniProtKB-UniRule"/>
</dbReference>
<dbReference type="GO" id="GO:0006426">
    <property type="term" value="P:glycyl-tRNA aminoacylation"/>
    <property type="evidence" value="ECO:0007669"/>
    <property type="project" value="UniProtKB-UniRule"/>
</dbReference>
<dbReference type="CDD" id="cd00733">
    <property type="entry name" value="GlyRS_alpha_core"/>
    <property type="match status" value="1"/>
</dbReference>
<dbReference type="FunFam" id="3.30.930.10:FF:000006">
    <property type="entry name" value="Glycine--tRNA ligase alpha subunit"/>
    <property type="match status" value="1"/>
</dbReference>
<dbReference type="Gene3D" id="3.30.930.10">
    <property type="entry name" value="Bira Bifunctional Protein, Domain 2"/>
    <property type="match status" value="1"/>
</dbReference>
<dbReference type="Gene3D" id="1.20.58.180">
    <property type="entry name" value="Class II aaRS and biotin synthetases, domain 2"/>
    <property type="match status" value="1"/>
</dbReference>
<dbReference type="HAMAP" id="MF_00254">
    <property type="entry name" value="Gly_tRNA_synth_alpha"/>
    <property type="match status" value="1"/>
</dbReference>
<dbReference type="InterPro" id="IPR045864">
    <property type="entry name" value="aa-tRNA-synth_II/BPL/LPL"/>
</dbReference>
<dbReference type="InterPro" id="IPR006194">
    <property type="entry name" value="Gly-tRNA-synth_heterodimer"/>
</dbReference>
<dbReference type="InterPro" id="IPR002310">
    <property type="entry name" value="Gly-tRNA_ligase_asu"/>
</dbReference>
<dbReference type="NCBIfam" id="TIGR00388">
    <property type="entry name" value="glyQ"/>
    <property type="match status" value="1"/>
</dbReference>
<dbReference type="NCBIfam" id="NF006827">
    <property type="entry name" value="PRK09348.1"/>
    <property type="match status" value="1"/>
</dbReference>
<dbReference type="PANTHER" id="PTHR30075:SF2">
    <property type="entry name" value="GLYCINE--TRNA LIGASE, CHLOROPLASTIC_MITOCHONDRIAL 2"/>
    <property type="match status" value="1"/>
</dbReference>
<dbReference type="PANTHER" id="PTHR30075">
    <property type="entry name" value="GLYCYL-TRNA SYNTHETASE"/>
    <property type="match status" value="1"/>
</dbReference>
<dbReference type="Pfam" id="PF02091">
    <property type="entry name" value="tRNA-synt_2e"/>
    <property type="match status" value="1"/>
</dbReference>
<dbReference type="PRINTS" id="PR01044">
    <property type="entry name" value="TRNASYNTHGA"/>
</dbReference>
<dbReference type="SUPFAM" id="SSF55681">
    <property type="entry name" value="Class II aaRS and biotin synthetases"/>
    <property type="match status" value="1"/>
</dbReference>
<dbReference type="PROSITE" id="PS50861">
    <property type="entry name" value="AA_TRNA_LIGASE_II_GLYAB"/>
    <property type="match status" value="1"/>
</dbReference>